<dbReference type="EC" id="1.1.5.3" evidence="1"/>
<dbReference type="EMBL" id="AM933172">
    <property type="protein sequence ID" value="CAR33851.1"/>
    <property type="molecule type" value="Genomic_DNA"/>
</dbReference>
<dbReference type="RefSeq" id="WP_000667146.1">
    <property type="nucleotide sequence ID" value="NC_011294.1"/>
</dbReference>
<dbReference type="KEGG" id="set:SEN2267"/>
<dbReference type="HOGENOM" id="CLU_047793_0_0_6"/>
<dbReference type="UniPathway" id="UPA00618">
    <property type="reaction ID" value="UER00673"/>
</dbReference>
<dbReference type="Proteomes" id="UP000000613">
    <property type="component" value="Chromosome"/>
</dbReference>
<dbReference type="GO" id="GO:0009331">
    <property type="term" value="C:glycerol-3-phosphate dehydrogenase (FAD) complex"/>
    <property type="evidence" value="ECO:0007669"/>
    <property type="project" value="InterPro"/>
</dbReference>
<dbReference type="GO" id="GO:0004368">
    <property type="term" value="F:glycerol-3-phosphate dehydrogenase (quinone) activity"/>
    <property type="evidence" value="ECO:0007669"/>
    <property type="project" value="UniProtKB-UniRule"/>
</dbReference>
<dbReference type="GO" id="GO:0009061">
    <property type="term" value="P:anaerobic respiration"/>
    <property type="evidence" value="ECO:0007669"/>
    <property type="project" value="TreeGrafter"/>
</dbReference>
<dbReference type="GO" id="GO:0019563">
    <property type="term" value="P:glycerol catabolic process"/>
    <property type="evidence" value="ECO:0007669"/>
    <property type="project" value="UniProtKB-UniRule"/>
</dbReference>
<dbReference type="GO" id="GO:0046168">
    <property type="term" value="P:glycerol-3-phosphate catabolic process"/>
    <property type="evidence" value="ECO:0007669"/>
    <property type="project" value="TreeGrafter"/>
</dbReference>
<dbReference type="FunFam" id="3.50.50.60:FF:000125">
    <property type="entry name" value="Anaerobic glycerol-3-phosphate dehydrogenase subunit B"/>
    <property type="match status" value="1"/>
</dbReference>
<dbReference type="Gene3D" id="3.50.50.60">
    <property type="entry name" value="FAD/NAD(P)-binding domain"/>
    <property type="match status" value="1"/>
</dbReference>
<dbReference type="HAMAP" id="MF_00753">
    <property type="entry name" value="Glycerol3P_GlpB"/>
    <property type="match status" value="1"/>
</dbReference>
<dbReference type="InterPro" id="IPR003953">
    <property type="entry name" value="FAD-dep_OxRdtase_2_FAD-bd"/>
</dbReference>
<dbReference type="InterPro" id="IPR050315">
    <property type="entry name" value="FAD-oxidoreductase_2"/>
</dbReference>
<dbReference type="InterPro" id="IPR036188">
    <property type="entry name" value="FAD/NAD-bd_sf"/>
</dbReference>
<dbReference type="InterPro" id="IPR009158">
    <property type="entry name" value="G3P_DH_GlpB_su"/>
</dbReference>
<dbReference type="NCBIfam" id="TIGR03378">
    <property type="entry name" value="glycerol3P_GlpB"/>
    <property type="match status" value="1"/>
</dbReference>
<dbReference type="NCBIfam" id="NF003718">
    <property type="entry name" value="PRK05329.1-1"/>
    <property type="match status" value="1"/>
</dbReference>
<dbReference type="NCBIfam" id="NF003719">
    <property type="entry name" value="PRK05329.1-2"/>
    <property type="match status" value="1"/>
</dbReference>
<dbReference type="NCBIfam" id="NF003720">
    <property type="entry name" value="PRK05329.1-3"/>
    <property type="match status" value="1"/>
</dbReference>
<dbReference type="PANTHER" id="PTHR43400:SF11">
    <property type="entry name" value="ANAEROBIC GLYCEROL-3-PHOSPHATE DEHYDROGENASE SUBUNIT B"/>
    <property type="match status" value="1"/>
</dbReference>
<dbReference type="PANTHER" id="PTHR43400">
    <property type="entry name" value="FUMARATE REDUCTASE"/>
    <property type="match status" value="1"/>
</dbReference>
<dbReference type="Pfam" id="PF00890">
    <property type="entry name" value="FAD_binding_2"/>
    <property type="match status" value="1"/>
</dbReference>
<dbReference type="PIRSF" id="PIRSF000141">
    <property type="entry name" value="Anaerobic_G3P_dh"/>
    <property type="match status" value="1"/>
</dbReference>
<dbReference type="SUPFAM" id="SSF51905">
    <property type="entry name" value="FAD/NAD(P)-binding domain"/>
    <property type="match status" value="1"/>
</dbReference>
<organism>
    <name type="scientific">Salmonella enteritidis PT4 (strain P125109)</name>
    <dbReference type="NCBI Taxonomy" id="550537"/>
    <lineage>
        <taxon>Bacteria</taxon>
        <taxon>Pseudomonadati</taxon>
        <taxon>Pseudomonadota</taxon>
        <taxon>Gammaproteobacteria</taxon>
        <taxon>Enterobacterales</taxon>
        <taxon>Enterobacteriaceae</taxon>
        <taxon>Salmonella</taxon>
    </lineage>
</organism>
<gene>
    <name evidence="1" type="primary">glpB</name>
    <name type="ordered locus">SEN2267</name>
</gene>
<keyword id="KW-0285">Flavoprotein</keyword>
<keyword id="KW-0288">FMN</keyword>
<keyword id="KW-0560">Oxidoreductase</keyword>
<proteinExistence type="inferred from homology"/>
<accession>B5R258</accession>
<evidence type="ECO:0000255" key="1">
    <source>
        <dbReference type="HAMAP-Rule" id="MF_00753"/>
    </source>
</evidence>
<protein>
    <recommendedName>
        <fullName evidence="1">Anaerobic glycerol-3-phosphate dehydrogenase subunit B</fullName>
        <shortName evidence="1">Anaerobic G-3-P dehydrogenase subunit B</shortName>
        <shortName evidence="1">Anaerobic G3Pdhase B</shortName>
        <ecNumber evidence="1">1.1.5.3</ecNumber>
    </recommendedName>
</protein>
<comment type="function">
    <text evidence="1">Conversion of glycerol 3-phosphate to dihydroxyacetone. Uses fumarate or nitrate as electron acceptor.</text>
</comment>
<comment type="catalytic activity">
    <reaction evidence="1">
        <text>a quinone + sn-glycerol 3-phosphate = dihydroxyacetone phosphate + a quinol</text>
        <dbReference type="Rhea" id="RHEA:18977"/>
        <dbReference type="ChEBI" id="CHEBI:24646"/>
        <dbReference type="ChEBI" id="CHEBI:57597"/>
        <dbReference type="ChEBI" id="CHEBI:57642"/>
        <dbReference type="ChEBI" id="CHEBI:132124"/>
        <dbReference type="EC" id="1.1.5.3"/>
    </reaction>
</comment>
<comment type="cofactor">
    <cofactor evidence="1">
        <name>FMN</name>
        <dbReference type="ChEBI" id="CHEBI:58210"/>
    </cofactor>
</comment>
<comment type="pathway">
    <text evidence="1">Polyol metabolism; glycerol degradation via glycerol kinase pathway; glycerone phosphate from sn-glycerol 3-phosphate (anaerobic route): step 1/1.</text>
</comment>
<comment type="subunit">
    <text evidence="1">Composed of a catalytic GlpA/B dimer and of membrane bound GlpC.</text>
</comment>
<comment type="similarity">
    <text evidence="1">Belongs to the anaerobic G-3-P dehydrogenase subunit B family.</text>
</comment>
<sequence>MKFDTVIMGGGLAGLLCGLQLQQHGLRCAIVTRGQSALHFSSGSLDLLSALPDGQPVTDITAGLDALCRQAPEHPYSRLGAQKVLTLAQQAQTLLNASGAQLYGDVQQAHQRVTPLGTLRSTWLSSPEVPVWPLSAQRICVVGVSGLLDFQAHLAAASLRQRDLNVETAEIDLPELDVLRDNPTEFRAVNIARLLDNEEKWPLLYDALSPIATNCDMIIMPACFGLANDTLWRWLNERLPCALTLLPTLPPSVLGIRLHNQLQRQFVRQGGIWMPGDEVKKVTCRRGTVSEIWTRNHADIPLRPRFAVLASGSFFSSGLVAEREGIREPILGLDVQQTATRAEWYQQHFFDPQPWQQFGVVTDDAFRPSLAGNTVENLYAIGSVLAGFDPIAEGCGGGVCAVSALQAAHHIAERAGEQQ</sequence>
<reference key="1">
    <citation type="journal article" date="2008" name="Genome Res.">
        <title>Comparative genome analysis of Salmonella enteritidis PT4 and Salmonella gallinarum 287/91 provides insights into evolutionary and host adaptation pathways.</title>
        <authorList>
            <person name="Thomson N.R."/>
            <person name="Clayton D.J."/>
            <person name="Windhorst D."/>
            <person name="Vernikos G."/>
            <person name="Davidson S."/>
            <person name="Churcher C."/>
            <person name="Quail M.A."/>
            <person name="Stevens M."/>
            <person name="Jones M.A."/>
            <person name="Watson M."/>
            <person name="Barron A."/>
            <person name="Layton A."/>
            <person name="Pickard D."/>
            <person name="Kingsley R.A."/>
            <person name="Bignell A."/>
            <person name="Clark L."/>
            <person name="Harris B."/>
            <person name="Ormond D."/>
            <person name="Abdellah Z."/>
            <person name="Brooks K."/>
            <person name="Cherevach I."/>
            <person name="Chillingworth T."/>
            <person name="Woodward J."/>
            <person name="Norberczak H."/>
            <person name="Lord A."/>
            <person name="Arrowsmith C."/>
            <person name="Jagels K."/>
            <person name="Moule S."/>
            <person name="Mungall K."/>
            <person name="Saunders M."/>
            <person name="Whitehead S."/>
            <person name="Chabalgoity J.A."/>
            <person name="Maskell D."/>
            <person name="Humphreys T."/>
            <person name="Roberts M."/>
            <person name="Barrow P.A."/>
            <person name="Dougan G."/>
            <person name="Parkhill J."/>
        </authorList>
    </citation>
    <scope>NUCLEOTIDE SEQUENCE [LARGE SCALE GENOMIC DNA]</scope>
    <source>
        <strain>P125109</strain>
    </source>
</reference>
<name>GLPB_SALEP</name>
<feature type="chain" id="PRO_1000133369" description="Anaerobic glycerol-3-phosphate dehydrogenase subunit B">
    <location>
        <begin position="1"/>
        <end position="419"/>
    </location>
</feature>